<reference key="1">
    <citation type="journal article" date="2005" name="Nucleic Acids Res.">
        <title>The genome sequence of Salmonella enterica serovar Choleraesuis, a highly invasive and resistant zoonotic pathogen.</title>
        <authorList>
            <person name="Chiu C.-H."/>
            <person name="Tang P."/>
            <person name="Chu C."/>
            <person name="Hu S."/>
            <person name="Bao Q."/>
            <person name="Yu J."/>
            <person name="Chou Y.-Y."/>
            <person name="Wang H.-S."/>
            <person name="Lee Y.-S."/>
        </authorList>
    </citation>
    <scope>NUCLEOTIDE SEQUENCE [LARGE SCALE GENOMIC DNA]</scope>
    <source>
        <strain>SC-B67</strain>
    </source>
</reference>
<gene>
    <name evidence="1" type="primary">thiK</name>
    <name type="ordered locus">SCH_1158</name>
</gene>
<sequence>MRSNNNNPLTRDEILSRYFPQYRPAVAASQGLSGGSCIIAHDTHRVVLRRHHDPDAPPAHFLRHYRALSQLPASLAPRALFYTPGWMAVEYLHGVVNSALPDADELAALLYHLHQQPRFGWRIALSPLLAQYWSCCDPARRTPFWLRRLKQLQKNGEPRPLRLAPLHMDVHGDNIVLTSAGLRLIDWEYAGDGDIALELAAVWVEDERQHRQLANAYAACARIDARQLWRQIRLWHPWVIMLKAGWFEYRWRQTGEQQFIRLADETWRQLRMKG</sequence>
<comment type="function">
    <text evidence="1">Catalyzes the ATP-dependent phosphorylation of thiamine to thiamine phosphate. Is involved in thiamine salvage.</text>
</comment>
<comment type="catalytic activity">
    <reaction evidence="1">
        <text>thiamine + ATP = thiamine phosphate + ADP + H(+)</text>
        <dbReference type="Rhea" id="RHEA:12012"/>
        <dbReference type="ChEBI" id="CHEBI:15378"/>
        <dbReference type="ChEBI" id="CHEBI:18385"/>
        <dbReference type="ChEBI" id="CHEBI:30616"/>
        <dbReference type="ChEBI" id="CHEBI:37575"/>
        <dbReference type="ChEBI" id="CHEBI:456216"/>
        <dbReference type="EC" id="2.7.1.89"/>
    </reaction>
    <physiologicalReaction direction="left-to-right" evidence="1">
        <dbReference type="Rhea" id="RHEA:12013"/>
    </physiologicalReaction>
</comment>
<comment type="pathway">
    <text evidence="1">Cofactor biosynthesis; thiamine diphosphate biosynthesis; thiamine phosphate from thiamine: step 1/1.</text>
</comment>
<comment type="similarity">
    <text evidence="1">Belongs to the thiamine kinase family.</text>
</comment>
<feature type="chain" id="PRO_0000290998" description="Thiamine kinase">
    <location>
        <begin position="1"/>
        <end position="274"/>
    </location>
</feature>
<evidence type="ECO:0000255" key="1">
    <source>
        <dbReference type="HAMAP-Rule" id="MF_01604"/>
    </source>
</evidence>
<name>THIK_SALCH</name>
<proteinExistence type="inferred from homology"/>
<keyword id="KW-0067">ATP-binding</keyword>
<keyword id="KW-0418">Kinase</keyword>
<keyword id="KW-0547">Nucleotide-binding</keyword>
<keyword id="KW-0808">Transferase</keyword>
<dbReference type="EC" id="2.7.1.89" evidence="1"/>
<dbReference type="EMBL" id="AE017220">
    <property type="protein sequence ID" value="AAX65064.1"/>
    <property type="molecule type" value="Genomic_DNA"/>
</dbReference>
<dbReference type="RefSeq" id="WP_001257334.1">
    <property type="nucleotide sequence ID" value="NC_006905.1"/>
</dbReference>
<dbReference type="SMR" id="Q57QE7"/>
<dbReference type="KEGG" id="sec:SCH_1158"/>
<dbReference type="HOGENOM" id="CLU_055115_2_1_6"/>
<dbReference type="UniPathway" id="UPA00060">
    <property type="reaction ID" value="UER00596"/>
</dbReference>
<dbReference type="Proteomes" id="UP000000538">
    <property type="component" value="Chromosome"/>
</dbReference>
<dbReference type="GO" id="GO:0005524">
    <property type="term" value="F:ATP binding"/>
    <property type="evidence" value="ECO:0007669"/>
    <property type="project" value="UniProtKB-KW"/>
</dbReference>
<dbReference type="GO" id="GO:0019165">
    <property type="term" value="F:thiamine kinase activity"/>
    <property type="evidence" value="ECO:0007669"/>
    <property type="project" value="UniProtKB-UniRule"/>
</dbReference>
<dbReference type="GO" id="GO:0009229">
    <property type="term" value="P:thiamine diphosphate biosynthetic process"/>
    <property type="evidence" value="ECO:0007669"/>
    <property type="project" value="UniProtKB-UniRule"/>
</dbReference>
<dbReference type="GO" id="GO:0006772">
    <property type="term" value="P:thiamine metabolic process"/>
    <property type="evidence" value="ECO:0007669"/>
    <property type="project" value="InterPro"/>
</dbReference>
<dbReference type="Gene3D" id="3.90.1200.10">
    <property type="match status" value="1"/>
</dbReference>
<dbReference type="HAMAP" id="MF_01604">
    <property type="entry name" value="Thiamine_kinase"/>
    <property type="match status" value="1"/>
</dbReference>
<dbReference type="InterPro" id="IPR002575">
    <property type="entry name" value="Aminoglycoside_PTrfase"/>
</dbReference>
<dbReference type="InterPro" id="IPR011009">
    <property type="entry name" value="Kinase-like_dom_sf"/>
</dbReference>
<dbReference type="InterPro" id="IPR014093">
    <property type="entry name" value="Thiamine_kinase"/>
</dbReference>
<dbReference type="NCBIfam" id="NF007620">
    <property type="entry name" value="PRK10271.1"/>
    <property type="match status" value="1"/>
</dbReference>
<dbReference type="NCBIfam" id="TIGR02721">
    <property type="entry name" value="ycfN_thiK"/>
    <property type="match status" value="1"/>
</dbReference>
<dbReference type="Pfam" id="PF01636">
    <property type="entry name" value="APH"/>
    <property type="match status" value="1"/>
</dbReference>
<dbReference type="SUPFAM" id="SSF56112">
    <property type="entry name" value="Protein kinase-like (PK-like)"/>
    <property type="match status" value="1"/>
</dbReference>
<protein>
    <recommendedName>
        <fullName evidence="1">Thiamine kinase</fullName>
        <ecNumber evidence="1">2.7.1.89</ecNumber>
    </recommendedName>
</protein>
<accession>Q57QE7</accession>
<organism>
    <name type="scientific">Salmonella choleraesuis (strain SC-B67)</name>
    <dbReference type="NCBI Taxonomy" id="321314"/>
    <lineage>
        <taxon>Bacteria</taxon>
        <taxon>Pseudomonadati</taxon>
        <taxon>Pseudomonadota</taxon>
        <taxon>Gammaproteobacteria</taxon>
        <taxon>Enterobacterales</taxon>
        <taxon>Enterobacteriaceae</taxon>
        <taxon>Salmonella</taxon>
    </lineage>
</organism>